<reference key="1">
    <citation type="journal article" date="2010" name="Genome Biol.">
        <title>Structure and dynamics of the pan-genome of Streptococcus pneumoniae and closely related species.</title>
        <authorList>
            <person name="Donati C."/>
            <person name="Hiller N.L."/>
            <person name="Tettelin H."/>
            <person name="Muzzi A."/>
            <person name="Croucher N.J."/>
            <person name="Angiuoli S.V."/>
            <person name="Oggioni M."/>
            <person name="Dunning Hotopp J.C."/>
            <person name="Hu F.Z."/>
            <person name="Riley D.R."/>
            <person name="Covacci A."/>
            <person name="Mitchell T.J."/>
            <person name="Bentley S.D."/>
            <person name="Kilian M."/>
            <person name="Ehrlich G.D."/>
            <person name="Rappuoli R."/>
            <person name="Moxon E.R."/>
            <person name="Masignani V."/>
        </authorList>
    </citation>
    <scope>NUCLEOTIDE SEQUENCE [LARGE SCALE GENOMIC DNA]</scope>
    <source>
        <strain>Hungary19A-6</strain>
    </source>
</reference>
<sequence>MKLLEERILKDGHILGDNILKVDSFLTHQVDFSLMREIGKVFAEKFAATGITKVVTIEASGIAPAVFTAEALNVPMIFAKKAKNITMNEGILTAQVYSFTKQVTSTVSIAGKFLSPEDKVLIIDDFLANGQAAKGLIQIIEQAGATVQAIGIVIEKSFQDGRDLLEKAGYPVLSLARLDRFENGQVVFKEADL</sequence>
<feature type="chain" id="PRO_1000138244" description="Xanthine phosphoribosyltransferase">
    <location>
        <begin position="1"/>
        <end position="193"/>
    </location>
</feature>
<feature type="binding site" evidence="1">
    <location>
        <position position="20"/>
    </location>
    <ligand>
        <name>xanthine</name>
        <dbReference type="ChEBI" id="CHEBI:17712"/>
    </ligand>
</feature>
<feature type="binding site" evidence="1">
    <location>
        <position position="27"/>
    </location>
    <ligand>
        <name>xanthine</name>
        <dbReference type="ChEBI" id="CHEBI:17712"/>
    </ligand>
</feature>
<feature type="binding site" evidence="1">
    <location>
        <begin position="128"/>
        <end position="132"/>
    </location>
    <ligand>
        <name>5-phospho-alpha-D-ribose 1-diphosphate</name>
        <dbReference type="ChEBI" id="CHEBI:58017"/>
    </ligand>
</feature>
<feature type="binding site" evidence="1">
    <location>
        <position position="156"/>
    </location>
    <ligand>
        <name>xanthine</name>
        <dbReference type="ChEBI" id="CHEBI:17712"/>
    </ligand>
</feature>
<organism>
    <name type="scientific">Streptococcus pneumoniae (strain Hungary19A-6)</name>
    <dbReference type="NCBI Taxonomy" id="487214"/>
    <lineage>
        <taxon>Bacteria</taxon>
        <taxon>Bacillati</taxon>
        <taxon>Bacillota</taxon>
        <taxon>Bacilli</taxon>
        <taxon>Lactobacillales</taxon>
        <taxon>Streptococcaceae</taxon>
        <taxon>Streptococcus</taxon>
    </lineage>
</organism>
<gene>
    <name evidence="1" type="primary">xpt</name>
    <name type="ordered locus">SPH_1962</name>
</gene>
<name>XPT_STRPI</name>
<accession>B1I857</accession>
<protein>
    <recommendedName>
        <fullName evidence="1">Xanthine phosphoribosyltransferase</fullName>
        <shortName evidence="1">XPRTase</shortName>
        <ecNumber evidence="1">2.4.2.22</ecNumber>
    </recommendedName>
</protein>
<comment type="function">
    <text evidence="1">Converts the preformed base xanthine, a product of nucleic acid breakdown, to xanthosine 5'-monophosphate (XMP), so it can be reused for RNA or DNA synthesis.</text>
</comment>
<comment type="catalytic activity">
    <reaction evidence="1">
        <text>XMP + diphosphate = xanthine + 5-phospho-alpha-D-ribose 1-diphosphate</text>
        <dbReference type="Rhea" id="RHEA:10800"/>
        <dbReference type="ChEBI" id="CHEBI:17712"/>
        <dbReference type="ChEBI" id="CHEBI:33019"/>
        <dbReference type="ChEBI" id="CHEBI:57464"/>
        <dbReference type="ChEBI" id="CHEBI:58017"/>
        <dbReference type="EC" id="2.4.2.22"/>
    </reaction>
</comment>
<comment type="pathway">
    <text evidence="1">Purine metabolism; XMP biosynthesis via salvage pathway; XMP from xanthine: step 1/1.</text>
</comment>
<comment type="subunit">
    <text evidence="1">Homodimer.</text>
</comment>
<comment type="subcellular location">
    <subcellularLocation>
        <location evidence="1">Cytoplasm</location>
    </subcellularLocation>
</comment>
<comment type="similarity">
    <text evidence="1">Belongs to the purine/pyrimidine phosphoribosyltransferase family. Xpt subfamily.</text>
</comment>
<keyword id="KW-0963">Cytoplasm</keyword>
<keyword id="KW-0328">Glycosyltransferase</keyword>
<keyword id="KW-0660">Purine salvage</keyword>
<keyword id="KW-0808">Transferase</keyword>
<evidence type="ECO:0000255" key="1">
    <source>
        <dbReference type="HAMAP-Rule" id="MF_01184"/>
    </source>
</evidence>
<dbReference type="EC" id="2.4.2.22" evidence="1"/>
<dbReference type="EMBL" id="CP000936">
    <property type="protein sequence ID" value="ACA36836.1"/>
    <property type="molecule type" value="Genomic_DNA"/>
</dbReference>
<dbReference type="RefSeq" id="WP_000770408.1">
    <property type="nucleotide sequence ID" value="NC_010380.1"/>
</dbReference>
<dbReference type="SMR" id="B1I857"/>
<dbReference type="KEGG" id="spv:SPH_1962"/>
<dbReference type="HOGENOM" id="CLU_099015_0_0_9"/>
<dbReference type="UniPathway" id="UPA00602">
    <property type="reaction ID" value="UER00658"/>
</dbReference>
<dbReference type="Proteomes" id="UP000002163">
    <property type="component" value="Chromosome"/>
</dbReference>
<dbReference type="GO" id="GO:0005737">
    <property type="term" value="C:cytoplasm"/>
    <property type="evidence" value="ECO:0007669"/>
    <property type="project" value="UniProtKB-SubCell"/>
</dbReference>
<dbReference type="GO" id="GO:0000310">
    <property type="term" value="F:xanthine phosphoribosyltransferase activity"/>
    <property type="evidence" value="ECO:0007669"/>
    <property type="project" value="UniProtKB-UniRule"/>
</dbReference>
<dbReference type="GO" id="GO:0006166">
    <property type="term" value="P:purine ribonucleoside salvage"/>
    <property type="evidence" value="ECO:0007669"/>
    <property type="project" value="UniProtKB-KW"/>
</dbReference>
<dbReference type="GO" id="GO:0046110">
    <property type="term" value="P:xanthine metabolic process"/>
    <property type="evidence" value="ECO:0007669"/>
    <property type="project" value="InterPro"/>
</dbReference>
<dbReference type="GO" id="GO:0032265">
    <property type="term" value="P:XMP salvage"/>
    <property type="evidence" value="ECO:0007669"/>
    <property type="project" value="UniProtKB-UniRule"/>
</dbReference>
<dbReference type="CDD" id="cd06223">
    <property type="entry name" value="PRTases_typeI"/>
    <property type="match status" value="1"/>
</dbReference>
<dbReference type="Gene3D" id="3.40.50.2020">
    <property type="match status" value="1"/>
</dbReference>
<dbReference type="HAMAP" id="MF_01184">
    <property type="entry name" value="XPRTase"/>
    <property type="match status" value="1"/>
</dbReference>
<dbReference type="InterPro" id="IPR000836">
    <property type="entry name" value="PRibTrfase_dom"/>
</dbReference>
<dbReference type="InterPro" id="IPR029057">
    <property type="entry name" value="PRTase-like"/>
</dbReference>
<dbReference type="InterPro" id="IPR050118">
    <property type="entry name" value="Pur/Pyrimidine_PRTase"/>
</dbReference>
<dbReference type="InterPro" id="IPR010079">
    <property type="entry name" value="Xanthine_PRibTrfase"/>
</dbReference>
<dbReference type="NCBIfam" id="NF006671">
    <property type="entry name" value="PRK09219.1"/>
    <property type="match status" value="1"/>
</dbReference>
<dbReference type="NCBIfam" id="TIGR01744">
    <property type="entry name" value="XPRTase"/>
    <property type="match status" value="1"/>
</dbReference>
<dbReference type="PANTHER" id="PTHR43864">
    <property type="entry name" value="HYPOXANTHINE/GUANINE PHOSPHORIBOSYLTRANSFERASE"/>
    <property type="match status" value="1"/>
</dbReference>
<dbReference type="PANTHER" id="PTHR43864:SF1">
    <property type="entry name" value="XANTHINE PHOSPHORIBOSYLTRANSFERASE"/>
    <property type="match status" value="1"/>
</dbReference>
<dbReference type="Pfam" id="PF00156">
    <property type="entry name" value="Pribosyltran"/>
    <property type="match status" value="1"/>
</dbReference>
<dbReference type="SUPFAM" id="SSF53271">
    <property type="entry name" value="PRTase-like"/>
    <property type="match status" value="1"/>
</dbReference>
<proteinExistence type="inferred from homology"/>